<keyword id="KW-0002">3D-structure</keyword>
<keyword id="KW-0025">Alternative splicing</keyword>
<keyword id="KW-1267">Proteomics identification</keyword>
<keyword id="KW-1185">Reference proteome</keyword>
<name>RWD2A_HUMAN</name>
<comment type="interaction">
    <interactant intactId="EBI-17677006">
        <id>Q9UIY3</id>
    </interactant>
    <interactant intactId="EBI-1642523">
        <id>Q15052</id>
        <label>ARHGEF6</label>
    </interactant>
    <organismsDiffer>false</organismsDiffer>
    <experiments>3</experiments>
</comment>
<comment type="interaction">
    <interactant intactId="EBI-17677006">
        <id>Q9UIY3</id>
    </interactant>
    <interactant intactId="EBI-987834">
        <id>O95352</id>
        <label>ATG7</label>
    </interactant>
    <organismsDiffer>false</organismsDiffer>
    <experiments>3</experiments>
</comment>
<comment type="interaction">
    <interactant intactId="EBI-17677006">
        <id>Q9UIY3</id>
    </interactant>
    <interactant intactId="EBI-9384556">
        <id>Q9BTE3-2</id>
        <label>MCMBP</label>
    </interactant>
    <organismsDiffer>false</organismsDiffer>
    <experiments>3</experiments>
</comment>
<comment type="interaction">
    <interactant intactId="EBI-17677006">
        <id>Q9UIY3</id>
    </interactant>
    <interactant intactId="EBI-372273">
        <id>P20618</id>
        <label>PSMB1</label>
    </interactant>
    <organismsDiffer>false</organismsDiffer>
    <experiments>3</experiments>
</comment>
<comment type="alternative products">
    <event type="alternative splicing"/>
    <isoform>
        <id>Q9UIY3-1</id>
        <name>1</name>
        <sequence type="displayed"/>
    </isoform>
    <isoform>
        <id>Q9UIY3-2</id>
        <name>2</name>
        <sequence type="described" ref="VSP_055504"/>
    </isoform>
</comment>
<evidence type="ECO:0000255" key="1">
    <source>
        <dbReference type="PROSITE-ProRule" id="PRU00179"/>
    </source>
</evidence>
<evidence type="ECO:0000303" key="2">
    <source>
    </source>
</evidence>
<evidence type="ECO:0000305" key="3"/>
<evidence type="ECO:0007829" key="4">
    <source>
        <dbReference type="PDB" id="2DAW"/>
    </source>
</evidence>
<gene>
    <name type="primary">RWDD2A</name>
    <name type="synonym">RWDD2</name>
</gene>
<reference key="1">
    <citation type="journal article" date="2004" name="Nat. Genet.">
        <title>Complete sequencing and characterization of 21,243 full-length human cDNAs.</title>
        <authorList>
            <person name="Ota T."/>
            <person name="Suzuki Y."/>
            <person name="Nishikawa T."/>
            <person name="Otsuki T."/>
            <person name="Sugiyama T."/>
            <person name="Irie R."/>
            <person name="Wakamatsu A."/>
            <person name="Hayashi K."/>
            <person name="Sato H."/>
            <person name="Nagai K."/>
            <person name="Kimura K."/>
            <person name="Makita H."/>
            <person name="Sekine M."/>
            <person name="Obayashi M."/>
            <person name="Nishi T."/>
            <person name="Shibahara T."/>
            <person name="Tanaka T."/>
            <person name="Ishii S."/>
            <person name="Yamamoto J."/>
            <person name="Saito K."/>
            <person name="Kawai Y."/>
            <person name="Isono Y."/>
            <person name="Nakamura Y."/>
            <person name="Nagahari K."/>
            <person name="Murakami K."/>
            <person name="Yasuda T."/>
            <person name="Iwayanagi T."/>
            <person name="Wagatsuma M."/>
            <person name="Shiratori A."/>
            <person name="Sudo H."/>
            <person name="Hosoiri T."/>
            <person name="Kaku Y."/>
            <person name="Kodaira H."/>
            <person name="Kondo H."/>
            <person name="Sugawara M."/>
            <person name="Takahashi M."/>
            <person name="Kanda K."/>
            <person name="Yokoi T."/>
            <person name="Furuya T."/>
            <person name="Kikkawa E."/>
            <person name="Omura Y."/>
            <person name="Abe K."/>
            <person name="Kamihara K."/>
            <person name="Katsuta N."/>
            <person name="Sato K."/>
            <person name="Tanikawa M."/>
            <person name="Yamazaki M."/>
            <person name="Ninomiya K."/>
            <person name="Ishibashi T."/>
            <person name="Yamashita H."/>
            <person name="Murakawa K."/>
            <person name="Fujimori K."/>
            <person name="Tanai H."/>
            <person name="Kimata M."/>
            <person name="Watanabe M."/>
            <person name="Hiraoka S."/>
            <person name="Chiba Y."/>
            <person name="Ishida S."/>
            <person name="Ono Y."/>
            <person name="Takiguchi S."/>
            <person name="Watanabe S."/>
            <person name="Yosida M."/>
            <person name="Hotuta T."/>
            <person name="Kusano J."/>
            <person name="Kanehori K."/>
            <person name="Takahashi-Fujii A."/>
            <person name="Hara H."/>
            <person name="Tanase T.-O."/>
            <person name="Nomura Y."/>
            <person name="Togiya S."/>
            <person name="Komai F."/>
            <person name="Hara R."/>
            <person name="Takeuchi K."/>
            <person name="Arita M."/>
            <person name="Imose N."/>
            <person name="Musashino K."/>
            <person name="Yuuki H."/>
            <person name="Oshima A."/>
            <person name="Sasaki N."/>
            <person name="Aotsuka S."/>
            <person name="Yoshikawa Y."/>
            <person name="Matsunawa H."/>
            <person name="Ichihara T."/>
            <person name="Shiohata N."/>
            <person name="Sano S."/>
            <person name="Moriya S."/>
            <person name="Momiyama H."/>
            <person name="Satoh N."/>
            <person name="Takami S."/>
            <person name="Terashima Y."/>
            <person name="Suzuki O."/>
            <person name="Nakagawa S."/>
            <person name="Senoh A."/>
            <person name="Mizoguchi H."/>
            <person name="Goto Y."/>
            <person name="Shimizu F."/>
            <person name="Wakebe H."/>
            <person name="Hishigaki H."/>
            <person name="Watanabe T."/>
            <person name="Sugiyama A."/>
            <person name="Takemoto M."/>
            <person name="Kawakami B."/>
            <person name="Yamazaki M."/>
            <person name="Watanabe K."/>
            <person name="Kumagai A."/>
            <person name="Itakura S."/>
            <person name="Fukuzumi Y."/>
            <person name="Fujimori Y."/>
            <person name="Komiyama M."/>
            <person name="Tashiro H."/>
            <person name="Tanigami A."/>
            <person name="Fujiwara T."/>
            <person name="Ono T."/>
            <person name="Yamada K."/>
            <person name="Fujii Y."/>
            <person name="Ozaki K."/>
            <person name="Hirao M."/>
            <person name="Ohmori Y."/>
            <person name="Kawabata A."/>
            <person name="Hikiji T."/>
            <person name="Kobatake N."/>
            <person name="Inagaki H."/>
            <person name="Ikema Y."/>
            <person name="Okamoto S."/>
            <person name="Okitani R."/>
            <person name="Kawakami T."/>
            <person name="Noguchi S."/>
            <person name="Itoh T."/>
            <person name="Shigeta K."/>
            <person name="Senba T."/>
            <person name="Matsumura K."/>
            <person name="Nakajima Y."/>
            <person name="Mizuno T."/>
            <person name="Morinaga M."/>
            <person name="Sasaki M."/>
            <person name="Togashi T."/>
            <person name="Oyama M."/>
            <person name="Hata H."/>
            <person name="Watanabe M."/>
            <person name="Komatsu T."/>
            <person name="Mizushima-Sugano J."/>
            <person name="Satoh T."/>
            <person name="Shirai Y."/>
            <person name="Takahashi Y."/>
            <person name="Nakagawa K."/>
            <person name="Okumura K."/>
            <person name="Nagase T."/>
            <person name="Nomura N."/>
            <person name="Kikuchi H."/>
            <person name="Masuho Y."/>
            <person name="Yamashita R."/>
            <person name="Nakai K."/>
            <person name="Yada T."/>
            <person name="Nakamura Y."/>
            <person name="Ohara O."/>
            <person name="Isogai T."/>
            <person name="Sugano S."/>
        </authorList>
    </citation>
    <scope>NUCLEOTIDE SEQUENCE [LARGE SCALE MRNA] (ISOFORM 2)</scope>
    <source>
        <tissue>Hippocampus</tissue>
    </source>
</reference>
<reference key="2">
    <citation type="journal article" date="2003" name="Nature">
        <title>The DNA sequence and analysis of human chromosome 6.</title>
        <authorList>
            <person name="Mungall A.J."/>
            <person name="Palmer S.A."/>
            <person name="Sims S.K."/>
            <person name="Edwards C.A."/>
            <person name="Ashurst J.L."/>
            <person name="Wilming L."/>
            <person name="Jones M.C."/>
            <person name="Horton R."/>
            <person name="Hunt S.E."/>
            <person name="Scott C.E."/>
            <person name="Gilbert J.G.R."/>
            <person name="Clamp M.E."/>
            <person name="Bethel G."/>
            <person name="Milne S."/>
            <person name="Ainscough R."/>
            <person name="Almeida J.P."/>
            <person name="Ambrose K.D."/>
            <person name="Andrews T.D."/>
            <person name="Ashwell R.I.S."/>
            <person name="Babbage A.K."/>
            <person name="Bagguley C.L."/>
            <person name="Bailey J."/>
            <person name="Banerjee R."/>
            <person name="Barker D.J."/>
            <person name="Barlow K.F."/>
            <person name="Bates K."/>
            <person name="Beare D.M."/>
            <person name="Beasley H."/>
            <person name="Beasley O."/>
            <person name="Bird C.P."/>
            <person name="Blakey S.E."/>
            <person name="Bray-Allen S."/>
            <person name="Brook J."/>
            <person name="Brown A.J."/>
            <person name="Brown J.Y."/>
            <person name="Burford D.C."/>
            <person name="Burrill W."/>
            <person name="Burton J."/>
            <person name="Carder C."/>
            <person name="Carter N.P."/>
            <person name="Chapman J.C."/>
            <person name="Clark S.Y."/>
            <person name="Clark G."/>
            <person name="Clee C.M."/>
            <person name="Clegg S."/>
            <person name="Cobley V."/>
            <person name="Collier R.E."/>
            <person name="Collins J.E."/>
            <person name="Colman L.K."/>
            <person name="Corby N.R."/>
            <person name="Coville G.J."/>
            <person name="Culley K.M."/>
            <person name="Dhami P."/>
            <person name="Davies J."/>
            <person name="Dunn M."/>
            <person name="Earthrowl M.E."/>
            <person name="Ellington A.E."/>
            <person name="Evans K.A."/>
            <person name="Faulkner L."/>
            <person name="Francis M.D."/>
            <person name="Frankish A."/>
            <person name="Frankland J."/>
            <person name="French L."/>
            <person name="Garner P."/>
            <person name="Garnett J."/>
            <person name="Ghori M.J."/>
            <person name="Gilby L.M."/>
            <person name="Gillson C.J."/>
            <person name="Glithero R.J."/>
            <person name="Grafham D.V."/>
            <person name="Grant M."/>
            <person name="Gribble S."/>
            <person name="Griffiths C."/>
            <person name="Griffiths M.N.D."/>
            <person name="Hall R."/>
            <person name="Halls K.S."/>
            <person name="Hammond S."/>
            <person name="Harley J.L."/>
            <person name="Hart E.A."/>
            <person name="Heath P.D."/>
            <person name="Heathcott R."/>
            <person name="Holmes S.J."/>
            <person name="Howden P.J."/>
            <person name="Howe K.L."/>
            <person name="Howell G.R."/>
            <person name="Huckle E."/>
            <person name="Humphray S.J."/>
            <person name="Humphries M.D."/>
            <person name="Hunt A.R."/>
            <person name="Johnson C.M."/>
            <person name="Joy A.A."/>
            <person name="Kay M."/>
            <person name="Keenan S.J."/>
            <person name="Kimberley A.M."/>
            <person name="King A."/>
            <person name="Laird G.K."/>
            <person name="Langford C."/>
            <person name="Lawlor S."/>
            <person name="Leongamornlert D.A."/>
            <person name="Leversha M."/>
            <person name="Lloyd C.R."/>
            <person name="Lloyd D.M."/>
            <person name="Loveland J.E."/>
            <person name="Lovell J."/>
            <person name="Martin S."/>
            <person name="Mashreghi-Mohammadi M."/>
            <person name="Maslen G.L."/>
            <person name="Matthews L."/>
            <person name="McCann O.T."/>
            <person name="McLaren S.J."/>
            <person name="McLay K."/>
            <person name="McMurray A."/>
            <person name="Moore M.J.F."/>
            <person name="Mullikin J.C."/>
            <person name="Niblett D."/>
            <person name="Nickerson T."/>
            <person name="Novik K.L."/>
            <person name="Oliver K."/>
            <person name="Overton-Larty E.K."/>
            <person name="Parker A."/>
            <person name="Patel R."/>
            <person name="Pearce A.V."/>
            <person name="Peck A.I."/>
            <person name="Phillimore B.J.C.T."/>
            <person name="Phillips S."/>
            <person name="Plumb R.W."/>
            <person name="Porter K.M."/>
            <person name="Ramsey Y."/>
            <person name="Ranby S.A."/>
            <person name="Rice C.M."/>
            <person name="Ross M.T."/>
            <person name="Searle S.M."/>
            <person name="Sehra H.K."/>
            <person name="Sheridan E."/>
            <person name="Skuce C.D."/>
            <person name="Smith S."/>
            <person name="Smith M."/>
            <person name="Spraggon L."/>
            <person name="Squares S.L."/>
            <person name="Steward C.A."/>
            <person name="Sycamore N."/>
            <person name="Tamlyn-Hall G."/>
            <person name="Tester J."/>
            <person name="Theaker A.J."/>
            <person name="Thomas D.W."/>
            <person name="Thorpe A."/>
            <person name="Tracey A."/>
            <person name="Tromans A."/>
            <person name="Tubby B."/>
            <person name="Wall M."/>
            <person name="Wallis J.M."/>
            <person name="West A.P."/>
            <person name="White S.S."/>
            <person name="Whitehead S.L."/>
            <person name="Whittaker H."/>
            <person name="Wild A."/>
            <person name="Willey D.J."/>
            <person name="Wilmer T.E."/>
            <person name="Wood J.M."/>
            <person name="Wray P.W."/>
            <person name="Wyatt J.C."/>
            <person name="Young L."/>
            <person name="Younger R.M."/>
            <person name="Bentley D.R."/>
            <person name="Coulson A."/>
            <person name="Durbin R.M."/>
            <person name="Hubbard T."/>
            <person name="Sulston J.E."/>
            <person name="Dunham I."/>
            <person name="Rogers J."/>
            <person name="Beck S."/>
        </authorList>
    </citation>
    <scope>NUCLEOTIDE SEQUENCE [LARGE SCALE GENOMIC DNA]</scope>
</reference>
<reference key="3">
    <citation type="submission" date="2005-09" db="EMBL/GenBank/DDBJ databases">
        <authorList>
            <person name="Mural R.J."/>
            <person name="Istrail S."/>
            <person name="Sutton G.G."/>
            <person name="Florea L."/>
            <person name="Halpern A.L."/>
            <person name="Mobarry C.M."/>
            <person name="Lippert R."/>
            <person name="Walenz B."/>
            <person name="Shatkay H."/>
            <person name="Dew I."/>
            <person name="Miller J.R."/>
            <person name="Flanigan M.J."/>
            <person name="Edwards N.J."/>
            <person name="Bolanos R."/>
            <person name="Fasulo D."/>
            <person name="Halldorsson B.V."/>
            <person name="Hannenhalli S."/>
            <person name="Turner R."/>
            <person name="Yooseph S."/>
            <person name="Lu F."/>
            <person name="Nusskern D.R."/>
            <person name="Shue B.C."/>
            <person name="Zheng X.H."/>
            <person name="Zhong F."/>
            <person name="Delcher A.L."/>
            <person name="Huson D.H."/>
            <person name="Kravitz S.A."/>
            <person name="Mouchard L."/>
            <person name="Reinert K."/>
            <person name="Remington K.A."/>
            <person name="Clark A.G."/>
            <person name="Waterman M.S."/>
            <person name="Eichler E.E."/>
            <person name="Adams M.D."/>
            <person name="Hunkapiller M.W."/>
            <person name="Myers E.W."/>
            <person name="Venter J.C."/>
        </authorList>
    </citation>
    <scope>NUCLEOTIDE SEQUENCE [LARGE SCALE GENOMIC DNA]</scope>
</reference>
<reference key="4">
    <citation type="journal article" date="2004" name="Genome Res.">
        <title>The status, quality, and expansion of the NIH full-length cDNA project: the Mammalian Gene Collection (MGC).</title>
        <authorList>
            <consortium name="The MGC Project Team"/>
        </authorList>
    </citation>
    <scope>NUCLEOTIDE SEQUENCE [LARGE SCALE MRNA] (ISOFORM 1)</scope>
    <source>
        <tissue>Bone marrow</tissue>
        <tissue>Liver</tissue>
    </source>
</reference>
<reference key="5">
    <citation type="submission" date="2006-06" db="PDB data bank">
        <title>Solution structure of the RWD domain of human RWD domain containing protein 2.</title>
        <authorList>
            <consortium name="RIKEN structural genomics initiative (RSGI)"/>
        </authorList>
    </citation>
    <scope>STRUCTURE BY NMR OF 1-141</scope>
</reference>
<dbReference type="EMBL" id="AK295724">
    <property type="protein sequence ID" value="BAG58565.1"/>
    <property type="molecule type" value="mRNA"/>
</dbReference>
<dbReference type="EMBL" id="AL049699">
    <property type="status" value="NOT_ANNOTATED_CDS"/>
    <property type="molecule type" value="Genomic_DNA"/>
</dbReference>
<dbReference type="EMBL" id="CH471051">
    <property type="protein sequence ID" value="EAW48665.1"/>
    <property type="molecule type" value="Genomic_DNA"/>
</dbReference>
<dbReference type="EMBL" id="CH471051">
    <property type="protein sequence ID" value="EAW48666.1"/>
    <property type="molecule type" value="Genomic_DNA"/>
</dbReference>
<dbReference type="EMBL" id="BC010930">
    <property type="protein sequence ID" value="AAH10930.1"/>
    <property type="molecule type" value="mRNA"/>
</dbReference>
<dbReference type="EMBL" id="BC104816">
    <property type="protein sequence ID" value="AAI04817.1"/>
    <property type="molecule type" value="mRNA"/>
</dbReference>
<dbReference type="EMBL" id="BC112003">
    <property type="protein sequence ID" value="AAI12004.1"/>
    <property type="molecule type" value="mRNA"/>
</dbReference>
<dbReference type="CCDS" id="CCDS4998.1">
    <molecule id="Q9UIY3-1"/>
</dbReference>
<dbReference type="RefSeq" id="NP_001309264.1">
    <property type="nucleotide sequence ID" value="NM_001322335.1"/>
</dbReference>
<dbReference type="RefSeq" id="NP_001309265.1">
    <property type="nucleotide sequence ID" value="NM_001322336.1"/>
</dbReference>
<dbReference type="RefSeq" id="NP_001309266.1">
    <property type="nucleotide sequence ID" value="NM_001322337.1"/>
</dbReference>
<dbReference type="RefSeq" id="NP_001309268.1">
    <property type="nucleotide sequence ID" value="NM_001322339.1"/>
</dbReference>
<dbReference type="RefSeq" id="NP_219479.2">
    <molecule id="Q9UIY3-1"/>
    <property type="nucleotide sequence ID" value="NM_033411.5"/>
</dbReference>
<dbReference type="RefSeq" id="XP_047274090.1">
    <molecule id="Q9UIY3-1"/>
    <property type="nucleotide sequence ID" value="XM_047418134.1"/>
</dbReference>
<dbReference type="RefSeq" id="XP_054210110.1">
    <molecule id="Q9UIY3-1"/>
    <property type="nucleotide sequence ID" value="XM_054354135.1"/>
</dbReference>
<dbReference type="PDB" id="2DAW">
    <property type="method" value="NMR"/>
    <property type="chains" value="A=1-141"/>
</dbReference>
<dbReference type="PDBsum" id="2DAW"/>
<dbReference type="BMRB" id="Q9UIY3"/>
<dbReference type="SMR" id="Q9UIY3"/>
<dbReference type="BioGRID" id="125196">
    <property type="interactions" value="8"/>
</dbReference>
<dbReference type="FunCoup" id="Q9UIY3">
    <property type="interactions" value="53"/>
</dbReference>
<dbReference type="IntAct" id="Q9UIY3">
    <property type="interactions" value="7"/>
</dbReference>
<dbReference type="STRING" id="9606.ENSP00000358739"/>
<dbReference type="iPTMnet" id="Q9UIY3"/>
<dbReference type="PhosphoSitePlus" id="Q9UIY3"/>
<dbReference type="BioMuta" id="RWDD2A"/>
<dbReference type="DMDM" id="9979483"/>
<dbReference type="jPOST" id="Q9UIY3"/>
<dbReference type="MassIVE" id="Q9UIY3"/>
<dbReference type="PaxDb" id="9606-ENSP00000358739"/>
<dbReference type="PeptideAtlas" id="Q9UIY3"/>
<dbReference type="ProteomicsDB" id="4318"/>
<dbReference type="ProteomicsDB" id="84576">
    <molecule id="Q9UIY3-1"/>
</dbReference>
<dbReference type="Pumba" id="Q9UIY3"/>
<dbReference type="Antibodypedia" id="31673">
    <property type="antibodies" value="63 antibodies from 15 providers"/>
</dbReference>
<dbReference type="DNASU" id="112611"/>
<dbReference type="Ensembl" id="ENST00000369724.5">
    <molecule id="Q9UIY3-1"/>
    <property type="protein sequence ID" value="ENSP00000358739.3"/>
    <property type="gene ID" value="ENSG00000013392.8"/>
</dbReference>
<dbReference type="GeneID" id="112611"/>
<dbReference type="KEGG" id="hsa:112611"/>
<dbReference type="MANE-Select" id="ENST00000369724.5">
    <property type="protein sequence ID" value="ENSP00000358739.3"/>
    <property type="RefSeq nucleotide sequence ID" value="NM_033411.5"/>
    <property type="RefSeq protein sequence ID" value="NP_219479.2"/>
</dbReference>
<dbReference type="UCSC" id="uc003pjx.5">
    <molecule id="Q9UIY3-1"/>
    <property type="organism name" value="human"/>
</dbReference>
<dbReference type="AGR" id="HGNC:21385"/>
<dbReference type="CTD" id="112611"/>
<dbReference type="DisGeNET" id="112611"/>
<dbReference type="GeneCards" id="RWDD2A"/>
<dbReference type="HGNC" id="HGNC:21385">
    <property type="gene designation" value="RWDD2A"/>
</dbReference>
<dbReference type="HPA" id="ENSG00000013392">
    <property type="expression patterns" value="Low tissue specificity"/>
</dbReference>
<dbReference type="neXtProt" id="NX_Q9UIY3"/>
<dbReference type="OpenTargets" id="ENSG00000013392"/>
<dbReference type="PharmGKB" id="PA162402307"/>
<dbReference type="VEuPathDB" id="HostDB:ENSG00000013392"/>
<dbReference type="eggNOG" id="ENOG502QTUP">
    <property type="taxonomic scope" value="Eukaryota"/>
</dbReference>
<dbReference type="GeneTree" id="ENSGT00390000007224"/>
<dbReference type="HOGENOM" id="CLU_046295_1_0_1"/>
<dbReference type="InParanoid" id="Q9UIY3"/>
<dbReference type="OMA" id="RENCEEF"/>
<dbReference type="OrthoDB" id="432412at2759"/>
<dbReference type="PAN-GO" id="Q9UIY3">
    <property type="GO annotations" value="0 GO annotations based on evolutionary models"/>
</dbReference>
<dbReference type="PhylomeDB" id="Q9UIY3"/>
<dbReference type="TreeFam" id="TF324344"/>
<dbReference type="PathwayCommons" id="Q9UIY3"/>
<dbReference type="SignaLink" id="Q9UIY3"/>
<dbReference type="BioGRID-ORCS" id="112611">
    <property type="hits" value="10 hits in 1155 CRISPR screens"/>
</dbReference>
<dbReference type="ChiTaRS" id="RWDD2A">
    <property type="organism name" value="human"/>
</dbReference>
<dbReference type="EvolutionaryTrace" id="Q9UIY3"/>
<dbReference type="GenomeRNAi" id="112611"/>
<dbReference type="Pharos" id="Q9UIY3">
    <property type="development level" value="Tdark"/>
</dbReference>
<dbReference type="PRO" id="PR:Q9UIY3"/>
<dbReference type="Proteomes" id="UP000005640">
    <property type="component" value="Chromosome 6"/>
</dbReference>
<dbReference type="RNAct" id="Q9UIY3">
    <property type="molecule type" value="protein"/>
</dbReference>
<dbReference type="Bgee" id="ENSG00000013392">
    <property type="expression patterns" value="Expressed in endothelial cell and 147 other cell types or tissues"/>
</dbReference>
<dbReference type="CDD" id="cd23829">
    <property type="entry name" value="RWD_RWDD2"/>
    <property type="match status" value="1"/>
</dbReference>
<dbReference type="CDD" id="cd24163">
    <property type="entry name" value="RWDD2_C"/>
    <property type="match status" value="1"/>
</dbReference>
<dbReference type="Gene3D" id="3.10.110.10">
    <property type="entry name" value="Ubiquitin Conjugating Enzyme"/>
    <property type="match status" value="1"/>
</dbReference>
<dbReference type="InterPro" id="IPR017359">
    <property type="entry name" value="Phi-like"/>
</dbReference>
<dbReference type="InterPro" id="IPR010541">
    <property type="entry name" value="Prp3_C"/>
</dbReference>
<dbReference type="InterPro" id="IPR006575">
    <property type="entry name" value="RWD_dom"/>
</dbReference>
<dbReference type="InterPro" id="IPR016135">
    <property type="entry name" value="UBQ-conjugating_enzyme/RWD"/>
</dbReference>
<dbReference type="PANTHER" id="PTHR15955">
    <property type="entry name" value="RWD DOMAIN CONTAINING PROTEIN 2"/>
    <property type="match status" value="1"/>
</dbReference>
<dbReference type="PANTHER" id="PTHR15955:SF3">
    <property type="entry name" value="RWD DOMAIN-CONTAINING PROTEIN 2A"/>
    <property type="match status" value="1"/>
</dbReference>
<dbReference type="Pfam" id="PF06544">
    <property type="entry name" value="Prp3_C"/>
    <property type="match status" value="1"/>
</dbReference>
<dbReference type="Pfam" id="PF05773">
    <property type="entry name" value="RWD"/>
    <property type="match status" value="1"/>
</dbReference>
<dbReference type="PIRSF" id="PIRSF038021">
    <property type="entry name" value="UCP038021_RWDD2"/>
    <property type="match status" value="1"/>
</dbReference>
<dbReference type="SMART" id="SM00591">
    <property type="entry name" value="RWD"/>
    <property type="match status" value="1"/>
</dbReference>
<dbReference type="SUPFAM" id="SSF54495">
    <property type="entry name" value="UBC-like"/>
    <property type="match status" value="1"/>
</dbReference>
<dbReference type="PROSITE" id="PS50908">
    <property type="entry name" value="RWD"/>
    <property type="match status" value="1"/>
</dbReference>
<feature type="chain" id="PRO_0000097543" description="RWD domain-containing protein 2A">
    <location>
        <begin position="1"/>
        <end position="292"/>
    </location>
</feature>
<feature type="domain" description="RWD" evidence="1">
    <location>
        <begin position="14"/>
        <end position="134"/>
    </location>
</feature>
<feature type="splice variant" id="VSP_055504" description="In isoform 2." evidence="2">
    <original>MSASVKESLQLQLLEMEMLFSMFPNQGEVKLEDVNALTNIKRYLEGTREALPPKIEFVITLQIEEP</original>
    <variation>MLWYLNLFDFHF</variation>
    <location>
        <begin position="1"/>
        <end position="66"/>
    </location>
</feature>
<feature type="sequence conflict" description="In Ref. 4; AAH10930." evidence="3" ref="4">
    <original>V</original>
    <variation>L</variation>
    <location>
        <position position="83"/>
    </location>
</feature>
<feature type="helix" evidence="4">
    <location>
        <begin position="5"/>
        <end position="22"/>
    </location>
</feature>
<feature type="strand" evidence="4">
    <location>
        <begin position="28"/>
        <end position="32"/>
    </location>
</feature>
<feature type="helix" evidence="4">
    <location>
        <begin position="34"/>
        <end position="36"/>
    </location>
</feature>
<feature type="helix" evidence="4">
    <location>
        <begin position="38"/>
        <end position="45"/>
    </location>
</feature>
<feature type="strand" evidence="4">
    <location>
        <begin position="55"/>
        <end position="63"/>
    </location>
</feature>
<feature type="turn" evidence="4">
    <location>
        <begin position="64"/>
        <end position="67"/>
    </location>
</feature>
<feature type="strand" evidence="4">
    <location>
        <begin position="68"/>
        <end position="76"/>
    </location>
</feature>
<feature type="strand" evidence="4">
    <location>
        <begin position="86"/>
        <end position="90"/>
    </location>
</feature>
<feature type="strand" evidence="4">
    <location>
        <begin position="92"/>
        <end position="94"/>
    </location>
</feature>
<feature type="helix" evidence="4">
    <location>
        <begin position="96"/>
        <end position="110"/>
    </location>
</feature>
<feature type="helix" evidence="4">
    <location>
        <begin position="120"/>
        <end position="129"/>
    </location>
</feature>
<feature type="helix" evidence="4">
    <location>
        <begin position="132"/>
        <end position="135"/>
    </location>
</feature>
<protein>
    <recommendedName>
        <fullName>RWD domain-containing protein 2A</fullName>
    </recommendedName>
</protein>
<proteinExistence type="evidence at protein level"/>
<accession>Q9UIY3</accession>
<accession>B4DIQ3</accession>
<accession>E1P548</accession>
<accession>Q2M3R3</accession>
<accession>Q96FH1</accession>
<sequence length="292" mass="33893">MSASVKESLQLQLLEMEMLFSMFPNQGEVKLEDVNALTNIKRYLEGTREALPPKIEFVITLQIEEPKVKIDLQVTMPHSYPYVALQLFGRSSELDRHQQLLLNKGLTSYIGTFDPGELCVCAAIQWLQDNSASYFLNRKLVYEPSTQAKPVKNTFLRMWIYSHHIYQQDLRKKILDVGKRLDVTGFCMTGKPGIICVEGFKEHCEEFWHTIRYPNWKHISCKHAESVETEGNGEDLRLFHSFEELLLEAHGDYGLRNDYHMNLGQFLEFLKKHKSEHVFQILFGIESKSSDS</sequence>
<organism>
    <name type="scientific">Homo sapiens</name>
    <name type="common">Human</name>
    <dbReference type="NCBI Taxonomy" id="9606"/>
    <lineage>
        <taxon>Eukaryota</taxon>
        <taxon>Metazoa</taxon>
        <taxon>Chordata</taxon>
        <taxon>Craniata</taxon>
        <taxon>Vertebrata</taxon>
        <taxon>Euteleostomi</taxon>
        <taxon>Mammalia</taxon>
        <taxon>Eutheria</taxon>
        <taxon>Euarchontoglires</taxon>
        <taxon>Primates</taxon>
        <taxon>Haplorrhini</taxon>
        <taxon>Catarrhini</taxon>
        <taxon>Hominidae</taxon>
        <taxon>Homo</taxon>
    </lineage>
</organism>